<sequence length="93" mass="10648">MRLVANTKSAKKRILIIRKRTMRNKAIRSAVKTAIKKFEMALKVKPAEEARELLRQAVRALDKAVTKGVIHKNTASRKKSRLTRKFNSVYKAS</sequence>
<proteinExistence type="inferred from homology"/>
<dbReference type="EMBL" id="CP000141">
    <property type="protein sequence ID" value="ABB15411.1"/>
    <property type="molecule type" value="Genomic_DNA"/>
</dbReference>
<dbReference type="SMR" id="Q3AF17"/>
<dbReference type="FunCoup" id="Q3AF17">
    <property type="interactions" value="350"/>
</dbReference>
<dbReference type="STRING" id="246194.CHY_0406"/>
<dbReference type="KEGG" id="chy:CHY_0406"/>
<dbReference type="eggNOG" id="COG0268">
    <property type="taxonomic scope" value="Bacteria"/>
</dbReference>
<dbReference type="HOGENOM" id="CLU_160655_0_1_9"/>
<dbReference type="InParanoid" id="Q3AF17"/>
<dbReference type="Proteomes" id="UP000002706">
    <property type="component" value="Chromosome"/>
</dbReference>
<dbReference type="GO" id="GO:0005829">
    <property type="term" value="C:cytosol"/>
    <property type="evidence" value="ECO:0007669"/>
    <property type="project" value="TreeGrafter"/>
</dbReference>
<dbReference type="GO" id="GO:0015935">
    <property type="term" value="C:small ribosomal subunit"/>
    <property type="evidence" value="ECO:0007669"/>
    <property type="project" value="TreeGrafter"/>
</dbReference>
<dbReference type="GO" id="GO:0070181">
    <property type="term" value="F:small ribosomal subunit rRNA binding"/>
    <property type="evidence" value="ECO:0007669"/>
    <property type="project" value="TreeGrafter"/>
</dbReference>
<dbReference type="GO" id="GO:0003735">
    <property type="term" value="F:structural constituent of ribosome"/>
    <property type="evidence" value="ECO:0007669"/>
    <property type="project" value="InterPro"/>
</dbReference>
<dbReference type="GO" id="GO:0006412">
    <property type="term" value="P:translation"/>
    <property type="evidence" value="ECO:0007669"/>
    <property type="project" value="UniProtKB-UniRule"/>
</dbReference>
<dbReference type="FunFam" id="1.20.58.110:FF:000001">
    <property type="entry name" value="30S ribosomal protein S20"/>
    <property type="match status" value="1"/>
</dbReference>
<dbReference type="Gene3D" id="1.20.58.110">
    <property type="entry name" value="Ribosomal protein S20"/>
    <property type="match status" value="1"/>
</dbReference>
<dbReference type="HAMAP" id="MF_00500">
    <property type="entry name" value="Ribosomal_bS20"/>
    <property type="match status" value="1"/>
</dbReference>
<dbReference type="InterPro" id="IPR002583">
    <property type="entry name" value="Ribosomal_bS20"/>
</dbReference>
<dbReference type="InterPro" id="IPR036510">
    <property type="entry name" value="Ribosomal_bS20_sf"/>
</dbReference>
<dbReference type="NCBIfam" id="TIGR00029">
    <property type="entry name" value="S20"/>
    <property type="match status" value="1"/>
</dbReference>
<dbReference type="PANTHER" id="PTHR33398">
    <property type="entry name" value="30S RIBOSOMAL PROTEIN S20"/>
    <property type="match status" value="1"/>
</dbReference>
<dbReference type="PANTHER" id="PTHR33398:SF1">
    <property type="entry name" value="SMALL RIBOSOMAL SUBUNIT PROTEIN BS20C"/>
    <property type="match status" value="1"/>
</dbReference>
<dbReference type="Pfam" id="PF01649">
    <property type="entry name" value="Ribosomal_S20p"/>
    <property type="match status" value="1"/>
</dbReference>
<dbReference type="SUPFAM" id="SSF46992">
    <property type="entry name" value="Ribosomal protein S20"/>
    <property type="match status" value="1"/>
</dbReference>
<reference key="1">
    <citation type="journal article" date="2005" name="PLoS Genet.">
        <title>Life in hot carbon monoxide: the complete genome sequence of Carboxydothermus hydrogenoformans Z-2901.</title>
        <authorList>
            <person name="Wu M."/>
            <person name="Ren Q."/>
            <person name="Durkin A.S."/>
            <person name="Daugherty S.C."/>
            <person name="Brinkac L.M."/>
            <person name="Dodson R.J."/>
            <person name="Madupu R."/>
            <person name="Sullivan S.A."/>
            <person name="Kolonay J.F."/>
            <person name="Nelson W.C."/>
            <person name="Tallon L.J."/>
            <person name="Jones K.M."/>
            <person name="Ulrich L.E."/>
            <person name="Gonzalez J.M."/>
            <person name="Zhulin I.B."/>
            <person name="Robb F.T."/>
            <person name="Eisen J.A."/>
        </authorList>
    </citation>
    <scope>NUCLEOTIDE SEQUENCE [LARGE SCALE GENOMIC DNA]</scope>
    <source>
        <strain>ATCC BAA-161 / DSM 6008 / Z-2901</strain>
    </source>
</reference>
<evidence type="ECO:0000255" key="1">
    <source>
        <dbReference type="HAMAP-Rule" id="MF_00500"/>
    </source>
</evidence>
<evidence type="ECO:0000256" key="2">
    <source>
        <dbReference type="SAM" id="MobiDB-lite"/>
    </source>
</evidence>
<evidence type="ECO:0000305" key="3"/>
<comment type="function">
    <text evidence="1">Binds directly to 16S ribosomal RNA.</text>
</comment>
<comment type="similarity">
    <text evidence="1">Belongs to the bacterial ribosomal protein bS20 family.</text>
</comment>
<name>RS20_CARHZ</name>
<keyword id="KW-1185">Reference proteome</keyword>
<keyword id="KW-0687">Ribonucleoprotein</keyword>
<keyword id="KW-0689">Ribosomal protein</keyword>
<keyword id="KW-0694">RNA-binding</keyword>
<keyword id="KW-0699">rRNA-binding</keyword>
<feature type="chain" id="PRO_0000224959" description="Small ribosomal subunit protein bS20">
    <location>
        <begin position="1"/>
        <end position="93"/>
    </location>
</feature>
<feature type="region of interest" description="Disordered" evidence="2">
    <location>
        <begin position="72"/>
        <end position="93"/>
    </location>
</feature>
<feature type="compositionally biased region" description="Basic residues" evidence="2">
    <location>
        <begin position="74"/>
        <end position="84"/>
    </location>
</feature>
<accession>Q3AF17</accession>
<organism>
    <name type="scientific">Carboxydothermus hydrogenoformans (strain ATCC BAA-161 / DSM 6008 / Z-2901)</name>
    <dbReference type="NCBI Taxonomy" id="246194"/>
    <lineage>
        <taxon>Bacteria</taxon>
        <taxon>Bacillati</taxon>
        <taxon>Bacillota</taxon>
        <taxon>Clostridia</taxon>
        <taxon>Thermoanaerobacterales</taxon>
        <taxon>Thermoanaerobacteraceae</taxon>
        <taxon>Carboxydothermus</taxon>
    </lineage>
</organism>
<protein>
    <recommendedName>
        <fullName evidence="1">Small ribosomal subunit protein bS20</fullName>
    </recommendedName>
    <alternativeName>
        <fullName evidence="3">30S ribosomal protein S20</fullName>
    </alternativeName>
</protein>
<gene>
    <name evidence="1" type="primary">rpsT</name>
    <name type="ordered locus">CHY_0406</name>
</gene>